<comment type="function">
    <text evidence="1">Associates with the EF-Tu.GDP complex and induces the exchange of GDP to GTP. It remains bound to the aminoacyl-tRNA.EF-Tu.GTP complex up to the GTP hydrolysis stage on the ribosome.</text>
</comment>
<comment type="subcellular location">
    <subcellularLocation>
        <location evidence="1">Cytoplasm</location>
    </subcellularLocation>
</comment>
<comment type="similarity">
    <text evidence="1">Belongs to the EF-Ts family.</text>
</comment>
<organism>
    <name type="scientific">Mesomycoplasma hyopneumoniae (strain 7448)</name>
    <name type="common">Mycoplasma hyopneumoniae</name>
    <dbReference type="NCBI Taxonomy" id="262722"/>
    <lineage>
        <taxon>Bacteria</taxon>
        <taxon>Bacillati</taxon>
        <taxon>Mycoplasmatota</taxon>
        <taxon>Mycoplasmoidales</taxon>
        <taxon>Metamycoplasmataceae</taxon>
        <taxon>Mesomycoplasma</taxon>
    </lineage>
</organism>
<proteinExistence type="inferred from homology"/>
<sequence length="303" mass="33923">MSQIDKMAKIKKLREISDAPFVDCKKALENSDYDIDLAINWLNKNGKSKALKKSDRIAAEGLVLAKKDANSVLVFELNSETDFVAKNQNFINLQQKIGELLLASDFANLDDALLIQDEAGRSISELLILATATIGEKITLRRVFKTKYSLEQSVEVYTHSNGQIAVITILKGGNLEIAKNISMHVAALNPQYILKVEVPNEKLQEIQLEVEKKAFAEVKNFEKKPENVRVGILKGMIDKQLSEFVLELQPLATDSAVTVEKYLAQNSATLEKVVRFEVGEGIQKQNVDFSAEVNQQIQEFQKK</sequence>
<evidence type="ECO:0000255" key="1">
    <source>
        <dbReference type="HAMAP-Rule" id="MF_00050"/>
    </source>
</evidence>
<feature type="chain" id="PRO_0000241494" description="Elongation factor Ts">
    <location>
        <begin position="1"/>
        <end position="303"/>
    </location>
</feature>
<feature type="region of interest" description="Involved in Mg(2+) ion dislocation from EF-Tu" evidence="1">
    <location>
        <begin position="81"/>
        <end position="84"/>
    </location>
</feature>
<accession>Q4A8V6</accession>
<keyword id="KW-0963">Cytoplasm</keyword>
<keyword id="KW-0251">Elongation factor</keyword>
<keyword id="KW-0648">Protein biosynthesis</keyword>
<gene>
    <name evidence="1" type="primary">tsf</name>
    <name type="ordered locus">MHP7448_0056</name>
</gene>
<reference key="1">
    <citation type="journal article" date="2005" name="J. Bacteriol.">
        <title>Swine and poultry pathogens: the complete genome sequences of two strains of Mycoplasma hyopneumoniae and a strain of Mycoplasma synoviae.</title>
        <authorList>
            <person name="Vasconcelos A.T.R."/>
            <person name="Ferreira H.B."/>
            <person name="Bizarro C.V."/>
            <person name="Bonatto S.L."/>
            <person name="Carvalho M.O."/>
            <person name="Pinto P.M."/>
            <person name="Almeida D.F."/>
            <person name="Almeida L.G.P."/>
            <person name="Almeida R."/>
            <person name="Alves-Junior L."/>
            <person name="Assuncao E.N."/>
            <person name="Azevedo V.A.C."/>
            <person name="Bogo M.R."/>
            <person name="Brigido M.M."/>
            <person name="Brocchi M."/>
            <person name="Burity H.A."/>
            <person name="Camargo A.A."/>
            <person name="Camargo S.S."/>
            <person name="Carepo M.S."/>
            <person name="Carraro D.M."/>
            <person name="de Mattos Cascardo J.C."/>
            <person name="Castro L.A."/>
            <person name="Cavalcanti G."/>
            <person name="Chemale G."/>
            <person name="Collevatti R.G."/>
            <person name="Cunha C.W."/>
            <person name="Dallagiovanna B."/>
            <person name="Dambros B.P."/>
            <person name="Dellagostin O.A."/>
            <person name="Falcao C."/>
            <person name="Fantinatti-Garboggini F."/>
            <person name="Felipe M.S.S."/>
            <person name="Fiorentin L."/>
            <person name="Franco G.R."/>
            <person name="Freitas N.S.A."/>
            <person name="Frias D."/>
            <person name="Grangeiro T.B."/>
            <person name="Grisard E.C."/>
            <person name="Guimaraes C.T."/>
            <person name="Hungria M."/>
            <person name="Jardim S.N."/>
            <person name="Krieger M.A."/>
            <person name="Laurino J.P."/>
            <person name="Lima L.F.A."/>
            <person name="Lopes M.I."/>
            <person name="Loreto E.L.S."/>
            <person name="Madeira H.M.F."/>
            <person name="Manfio G.P."/>
            <person name="Maranhao A.Q."/>
            <person name="Martinkovics C.T."/>
            <person name="Medeiros S.R.B."/>
            <person name="Moreira M.A.M."/>
            <person name="Neiva M."/>
            <person name="Ramalho-Neto C.E."/>
            <person name="Nicolas M.F."/>
            <person name="Oliveira S.C."/>
            <person name="Paixao R.F.C."/>
            <person name="Pedrosa F.O."/>
            <person name="Pena S.D.J."/>
            <person name="Pereira M."/>
            <person name="Pereira-Ferrari L."/>
            <person name="Piffer I."/>
            <person name="Pinto L.S."/>
            <person name="Potrich D.P."/>
            <person name="Salim A.C.M."/>
            <person name="Santos F.R."/>
            <person name="Schmitt R."/>
            <person name="Schneider M.P.C."/>
            <person name="Schrank A."/>
            <person name="Schrank I.S."/>
            <person name="Schuck A.F."/>
            <person name="Seuanez H.N."/>
            <person name="Silva D.W."/>
            <person name="Silva R."/>
            <person name="Silva S.C."/>
            <person name="Soares C.M.A."/>
            <person name="Souza K.R.L."/>
            <person name="Souza R.C."/>
            <person name="Staats C.C."/>
            <person name="Steffens M.B.R."/>
            <person name="Teixeira S.M.R."/>
            <person name="Urmenyi T.P."/>
            <person name="Vainstein M.H."/>
            <person name="Zuccherato L.W."/>
            <person name="Simpson A.J.G."/>
            <person name="Zaha A."/>
        </authorList>
    </citation>
    <scope>NUCLEOTIDE SEQUENCE [LARGE SCALE GENOMIC DNA]</scope>
    <source>
        <strain>7448</strain>
    </source>
</reference>
<dbReference type="EMBL" id="AE017244">
    <property type="protein sequence ID" value="AAZ53433.1"/>
    <property type="molecule type" value="Genomic_DNA"/>
</dbReference>
<dbReference type="RefSeq" id="WP_011289976.1">
    <property type="nucleotide sequence ID" value="NC_007332.1"/>
</dbReference>
<dbReference type="SMR" id="Q4A8V6"/>
<dbReference type="KEGG" id="mhp:MHP7448_0056"/>
<dbReference type="HOGENOM" id="CLU_047155_0_2_14"/>
<dbReference type="Proteomes" id="UP000000553">
    <property type="component" value="Chromosome"/>
</dbReference>
<dbReference type="GO" id="GO:0005737">
    <property type="term" value="C:cytoplasm"/>
    <property type="evidence" value="ECO:0007669"/>
    <property type="project" value="UniProtKB-SubCell"/>
</dbReference>
<dbReference type="GO" id="GO:0003746">
    <property type="term" value="F:translation elongation factor activity"/>
    <property type="evidence" value="ECO:0007669"/>
    <property type="project" value="UniProtKB-UniRule"/>
</dbReference>
<dbReference type="CDD" id="cd14275">
    <property type="entry name" value="UBA_EF-Ts"/>
    <property type="match status" value="1"/>
</dbReference>
<dbReference type="FunFam" id="1.10.8.10:FF:000001">
    <property type="entry name" value="Elongation factor Ts"/>
    <property type="match status" value="1"/>
</dbReference>
<dbReference type="Gene3D" id="1.10.286.20">
    <property type="match status" value="1"/>
</dbReference>
<dbReference type="Gene3D" id="1.10.8.10">
    <property type="entry name" value="DNA helicase RuvA subunit, C-terminal domain"/>
    <property type="match status" value="1"/>
</dbReference>
<dbReference type="Gene3D" id="3.30.479.20">
    <property type="entry name" value="Elongation factor Ts, dimerisation domain"/>
    <property type="match status" value="2"/>
</dbReference>
<dbReference type="HAMAP" id="MF_00050">
    <property type="entry name" value="EF_Ts"/>
    <property type="match status" value="1"/>
</dbReference>
<dbReference type="InterPro" id="IPR036402">
    <property type="entry name" value="EF-Ts_dimer_sf"/>
</dbReference>
<dbReference type="InterPro" id="IPR001816">
    <property type="entry name" value="Transl_elong_EFTs/EF1B"/>
</dbReference>
<dbReference type="InterPro" id="IPR014039">
    <property type="entry name" value="Transl_elong_EFTs/EF1B_dimer"/>
</dbReference>
<dbReference type="InterPro" id="IPR018101">
    <property type="entry name" value="Transl_elong_Ts_CS"/>
</dbReference>
<dbReference type="InterPro" id="IPR009060">
    <property type="entry name" value="UBA-like_sf"/>
</dbReference>
<dbReference type="NCBIfam" id="TIGR00116">
    <property type="entry name" value="tsf"/>
    <property type="match status" value="1"/>
</dbReference>
<dbReference type="PANTHER" id="PTHR11741">
    <property type="entry name" value="ELONGATION FACTOR TS"/>
    <property type="match status" value="1"/>
</dbReference>
<dbReference type="PANTHER" id="PTHR11741:SF0">
    <property type="entry name" value="ELONGATION FACTOR TS, MITOCHONDRIAL"/>
    <property type="match status" value="1"/>
</dbReference>
<dbReference type="Pfam" id="PF00889">
    <property type="entry name" value="EF_TS"/>
    <property type="match status" value="1"/>
</dbReference>
<dbReference type="SUPFAM" id="SSF54713">
    <property type="entry name" value="Elongation factor Ts (EF-Ts), dimerisation domain"/>
    <property type="match status" value="2"/>
</dbReference>
<dbReference type="SUPFAM" id="SSF46934">
    <property type="entry name" value="UBA-like"/>
    <property type="match status" value="1"/>
</dbReference>
<dbReference type="PROSITE" id="PS01127">
    <property type="entry name" value="EF_TS_2"/>
    <property type="match status" value="1"/>
</dbReference>
<name>EFTS_MESH7</name>
<protein>
    <recommendedName>
        <fullName evidence="1">Elongation factor Ts</fullName>
        <shortName evidence="1">EF-Ts</shortName>
    </recommendedName>
</protein>